<accession>P9WH32</accession>
<accession>L0T4I4</accession>
<accession>P66574</accession>
<accession>P95069</accession>
<organism>
    <name type="scientific">Mycobacterium tuberculosis (strain CDC 1551 / Oshkosh)</name>
    <dbReference type="NCBI Taxonomy" id="83331"/>
    <lineage>
        <taxon>Bacteria</taxon>
        <taxon>Bacillati</taxon>
        <taxon>Actinomycetota</taxon>
        <taxon>Actinomycetes</taxon>
        <taxon>Mycobacteriales</taxon>
        <taxon>Mycobacteriaceae</taxon>
        <taxon>Mycobacterium</taxon>
        <taxon>Mycobacterium tuberculosis complex</taxon>
    </lineage>
</organism>
<gene>
    <name evidence="1" type="primary">rpsE</name>
    <name type="ordered locus">MT0746</name>
</gene>
<keyword id="KW-1185">Reference proteome</keyword>
<keyword id="KW-0687">Ribonucleoprotein</keyword>
<keyword id="KW-0689">Ribosomal protein</keyword>
<keyword id="KW-0694">RNA-binding</keyword>
<keyword id="KW-0699">rRNA-binding</keyword>
<protein>
    <recommendedName>
        <fullName evidence="1">Small ribosomal subunit protein uS5</fullName>
    </recommendedName>
    <alternativeName>
        <fullName evidence="3">30S ribosomal protein S5</fullName>
    </alternativeName>
</protein>
<dbReference type="EMBL" id="AE000516">
    <property type="protein sequence ID" value="AAK44980.1"/>
    <property type="molecule type" value="Genomic_DNA"/>
</dbReference>
<dbReference type="PIR" id="D70644">
    <property type="entry name" value="D70644"/>
</dbReference>
<dbReference type="RefSeq" id="WP_003403680.1">
    <property type="nucleotide sequence ID" value="NZ_KK341227.1"/>
</dbReference>
<dbReference type="SMR" id="P9WH32"/>
<dbReference type="GeneID" id="45424686"/>
<dbReference type="KEGG" id="mtc:MT0746"/>
<dbReference type="PATRIC" id="fig|83331.31.peg.799"/>
<dbReference type="HOGENOM" id="CLU_065898_1_1_11"/>
<dbReference type="Proteomes" id="UP000001020">
    <property type="component" value="Chromosome"/>
</dbReference>
<dbReference type="GO" id="GO:0015935">
    <property type="term" value="C:small ribosomal subunit"/>
    <property type="evidence" value="ECO:0007669"/>
    <property type="project" value="InterPro"/>
</dbReference>
<dbReference type="GO" id="GO:0019843">
    <property type="term" value="F:rRNA binding"/>
    <property type="evidence" value="ECO:0007669"/>
    <property type="project" value="UniProtKB-UniRule"/>
</dbReference>
<dbReference type="GO" id="GO:0003735">
    <property type="term" value="F:structural constituent of ribosome"/>
    <property type="evidence" value="ECO:0007669"/>
    <property type="project" value="InterPro"/>
</dbReference>
<dbReference type="GO" id="GO:0006412">
    <property type="term" value="P:translation"/>
    <property type="evidence" value="ECO:0007669"/>
    <property type="project" value="UniProtKB-UniRule"/>
</dbReference>
<dbReference type="FunFam" id="3.30.160.20:FF:000001">
    <property type="entry name" value="30S ribosomal protein S5"/>
    <property type="match status" value="1"/>
</dbReference>
<dbReference type="FunFam" id="3.30.230.10:FF:000002">
    <property type="entry name" value="30S ribosomal protein S5"/>
    <property type="match status" value="1"/>
</dbReference>
<dbReference type="Gene3D" id="3.30.160.20">
    <property type="match status" value="1"/>
</dbReference>
<dbReference type="Gene3D" id="3.30.230.10">
    <property type="match status" value="1"/>
</dbReference>
<dbReference type="HAMAP" id="MF_01307_B">
    <property type="entry name" value="Ribosomal_uS5_B"/>
    <property type="match status" value="1"/>
</dbReference>
<dbReference type="InterPro" id="IPR020568">
    <property type="entry name" value="Ribosomal_Su5_D2-typ_SF"/>
</dbReference>
<dbReference type="InterPro" id="IPR000851">
    <property type="entry name" value="Ribosomal_uS5"/>
</dbReference>
<dbReference type="InterPro" id="IPR005712">
    <property type="entry name" value="Ribosomal_uS5_bac-type"/>
</dbReference>
<dbReference type="InterPro" id="IPR005324">
    <property type="entry name" value="Ribosomal_uS5_C"/>
</dbReference>
<dbReference type="InterPro" id="IPR013810">
    <property type="entry name" value="Ribosomal_uS5_N"/>
</dbReference>
<dbReference type="InterPro" id="IPR018192">
    <property type="entry name" value="Ribosomal_uS5_N_CS"/>
</dbReference>
<dbReference type="InterPro" id="IPR014721">
    <property type="entry name" value="Ribsml_uS5_D2-typ_fold_subgr"/>
</dbReference>
<dbReference type="NCBIfam" id="TIGR01021">
    <property type="entry name" value="rpsE_bact"/>
    <property type="match status" value="1"/>
</dbReference>
<dbReference type="PANTHER" id="PTHR48277">
    <property type="entry name" value="MITOCHONDRIAL RIBOSOMAL PROTEIN S5"/>
    <property type="match status" value="1"/>
</dbReference>
<dbReference type="PANTHER" id="PTHR48277:SF1">
    <property type="entry name" value="MITOCHONDRIAL RIBOSOMAL PROTEIN S5"/>
    <property type="match status" value="1"/>
</dbReference>
<dbReference type="Pfam" id="PF00333">
    <property type="entry name" value="Ribosomal_S5"/>
    <property type="match status" value="1"/>
</dbReference>
<dbReference type="Pfam" id="PF03719">
    <property type="entry name" value="Ribosomal_S5_C"/>
    <property type="match status" value="1"/>
</dbReference>
<dbReference type="SUPFAM" id="SSF54768">
    <property type="entry name" value="dsRNA-binding domain-like"/>
    <property type="match status" value="1"/>
</dbReference>
<dbReference type="SUPFAM" id="SSF54211">
    <property type="entry name" value="Ribosomal protein S5 domain 2-like"/>
    <property type="match status" value="1"/>
</dbReference>
<dbReference type="PROSITE" id="PS00585">
    <property type="entry name" value="RIBOSOMAL_S5"/>
    <property type="match status" value="1"/>
</dbReference>
<dbReference type="PROSITE" id="PS50881">
    <property type="entry name" value="S5_DSRBD"/>
    <property type="match status" value="1"/>
</dbReference>
<reference key="1">
    <citation type="journal article" date="2002" name="J. Bacteriol.">
        <title>Whole-genome comparison of Mycobacterium tuberculosis clinical and laboratory strains.</title>
        <authorList>
            <person name="Fleischmann R.D."/>
            <person name="Alland D."/>
            <person name="Eisen J.A."/>
            <person name="Carpenter L."/>
            <person name="White O."/>
            <person name="Peterson J.D."/>
            <person name="DeBoy R.T."/>
            <person name="Dodson R.J."/>
            <person name="Gwinn M.L."/>
            <person name="Haft D.H."/>
            <person name="Hickey E.K."/>
            <person name="Kolonay J.F."/>
            <person name="Nelson W.C."/>
            <person name="Umayam L.A."/>
            <person name="Ermolaeva M.D."/>
            <person name="Salzberg S.L."/>
            <person name="Delcher A."/>
            <person name="Utterback T.R."/>
            <person name="Weidman J.F."/>
            <person name="Khouri H.M."/>
            <person name="Gill J."/>
            <person name="Mikula A."/>
            <person name="Bishai W."/>
            <person name="Jacobs W.R. Jr."/>
            <person name="Venter J.C."/>
            <person name="Fraser C.M."/>
        </authorList>
    </citation>
    <scope>NUCLEOTIDE SEQUENCE [LARGE SCALE GENOMIC DNA]</scope>
    <source>
        <strain>CDC 1551 / Oshkosh</strain>
    </source>
</reference>
<feature type="chain" id="PRO_0000428257" description="Small ribosomal subunit protein uS5">
    <location>
        <begin position="1"/>
        <end position="220"/>
    </location>
</feature>
<feature type="domain" description="S5 DRBM" evidence="1">
    <location>
        <begin position="42"/>
        <end position="105"/>
    </location>
</feature>
<feature type="region of interest" description="Disordered" evidence="2">
    <location>
        <begin position="1"/>
        <end position="39"/>
    </location>
</feature>
<feature type="compositionally biased region" description="Basic and acidic residues" evidence="2">
    <location>
        <begin position="13"/>
        <end position="39"/>
    </location>
</feature>
<comment type="function">
    <text evidence="1">With S4 and S12 plays an important role in translational accuracy.</text>
</comment>
<comment type="function">
    <text evidence="1">Located at the back of the 30S subunit body where it stabilizes the conformation of the head with respect to the body.</text>
</comment>
<comment type="subunit">
    <text evidence="1">Part of the 30S ribosomal subunit. Contacts proteins S4 and S8.</text>
</comment>
<comment type="similarity">
    <text evidence="1">Belongs to the universal ribosomal protein uS5 family.</text>
</comment>
<name>RS5_MYCTO</name>
<proteinExistence type="inferred from homology"/>
<sequence length="220" mass="22888">MAEQPAGQAGTTDNRDARGDREGRRRDSGRGSRERDGEKSNYLERVVAINRVSKVVKGGRRFSFTALVIVGDGNGMVGVGYGKAKEVPAAIAKGVEEARKSFFRVPLIGGTITHPVQGEAAAGVVLLRPASPGTGVIAGGAARAVLECAGVHDILAKSLGSDNAINVVHATVAALKLLQRPEEVAARRGLPIEDVAPAGMLKARRKSEALAASVLPDRTI</sequence>
<evidence type="ECO:0000255" key="1">
    <source>
        <dbReference type="HAMAP-Rule" id="MF_01307"/>
    </source>
</evidence>
<evidence type="ECO:0000256" key="2">
    <source>
        <dbReference type="SAM" id="MobiDB-lite"/>
    </source>
</evidence>
<evidence type="ECO:0000305" key="3"/>